<organism>
    <name type="scientific">Cronobacter sakazakii (strain ATCC BAA-894)</name>
    <name type="common">Enterobacter sakazakii</name>
    <dbReference type="NCBI Taxonomy" id="290339"/>
    <lineage>
        <taxon>Bacteria</taxon>
        <taxon>Pseudomonadati</taxon>
        <taxon>Pseudomonadota</taxon>
        <taxon>Gammaproteobacteria</taxon>
        <taxon>Enterobacterales</taxon>
        <taxon>Enterobacteriaceae</taxon>
        <taxon>Cronobacter</taxon>
    </lineage>
</organism>
<gene>
    <name evidence="1" type="primary">clcA</name>
    <name evidence="1" type="synonym">eriC</name>
    <name type="ordered locus">ESA_03185</name>
</gene>
<accession>A7MGR4</accession>
<keyword id="KW-0050">Antiport</keyword>
<keyword id="KW-0997">Cell inner membrane</keyword>
<keyword id="KW-1003">Cell membrane</keyword>
<keyword id="KW-0868">Chloride</keyword>
<keyword id="KW-0406">Ion transport</keyword>
<keyword id="KW-0472">Membrane</keyword>
<keyword id="KW-1185">Reference proteome</keyword>
<keyword id="KW-0812">Transmembrane</keyword>
<keyword id="KW-1133">Transmembrane helix</keyword>
<keyword id="KW-0813">Transport</keyword>
<protein>
    <recommendedName>
        <fullName evidence="1">H(+)/Cl(-) exchange transporter ClcA</fullName>
    </recommendedName>
</protein>
<feature type="chain" id="PRO_1000065379" description="H(+)/Cl(-) exchange transporter ClcA">
    <location>
        <begin position="1"/>
        <end position="467"/>
    </location>
</feature>
<feature type="topological domain" description="Cytoplasmic" evidence="1">
    <location>
        <begin position="1"/>
        <end position="30"/>
    </location>
</feature>
<feature type="transmembrane region" description="Helical" evidence="1">
    <location>
        <begin position="31"/>
        <end position="67"/>
    </location>
</feature>
<feature type="topological domain" description="Periplasmic" evidence="1">
    <location>
        <begin position="68"/>
        <end position="74"/>
    </location>
</feature>
<feature type="transmembrane region" description="Helical" evidence="1">
    <location>
        <begin position="75"/>
        <end position="98"/>
    </location>
</feature>
<feature type="topological domain" description="Cytoplasmic" evidence="1">
    <location>
        <begin position="99"/>
        <end position="106"/>
    </location>
</feature>
<feature type="intramembrane region" description="Helical" evidence="1">
    <location>
        <begin position="107"/>
        <end position="114"/>
    </location>
</feature>
<feature type="topological domain" description="Cytoplasmic" evidence="1">
    <location>
        <begin position="115"/>
        <end position="121"/>
    </location>
</feature>
<feature type="transmembrane region" description="Helical" evidence="1">
    <location>
        <begin position="122"/>
        <end position="139"/>
    </location>
</feature>
<feature type="topological domain" description="Periplasmic" evidence="1">
    <location>
        <begin position="140"/>
        <end position="145"/>
    </location>
</feature>
<feature type="transmembrane region" description="Helical" evidence="1">
    <location>
        <begin position="146"/>
        <end position="164"/>
    </location>
</feature>
<feature type="topological domain" description="Cytoplasmic" evidence="1">
    <location>
        <begin position="165"/>
        <end position="174"/>
    </location>
</feature>
<feature type="intramembrane region" description="Helical" evidence="1">
    <location>
        <begin position="175"/>
        <end position="187"/>
    </location>
</feature>
<feature type="intramembrane region" description="Helical" evidence="1">
    <location>
        <begin position="191"/>
        <end position="199"/>
    </location>
</feature>
<feature type="topological domain" description="Cytoplasmic" evidence="1">
    <location>
        <begin position="200"/>
        <end position="212"/>
    </location>
</feature>
<feature type="transmembrane region" description="Helical" evidence="1">
    <location>
        <begin position="213"/>
        <end position="230"/>
    </location>
</feature>
<feature type="topological domain" description="Periplasmic" evidence="1">
    <location>
        <begin position="231"/>
        <end position="250"/>
    </location>
</feature>
<feature type="transmembrane region" description="Helical" evidence="1">
    <location>
        <begin position="251"/>
        <end position="279"/>
    </location>
</feature>
<feature type="topological domain" description="Cytoplasmic" evidence="1">
    <location>
        <begin position="280"/>
        <end position="285"/>
    </location>
</feature>
<feature type="transmembrane region" description="Helical" evidence="1">
    <location>
        <begin position="286"/>
        <end position="307"/>
    </location>
</feature>
<feature type="topological domain" description="Periplasmic" evidence="1">
    <location>
        <begin position="308"/>
        <end position="327"/>
    </location>
</feature>
<feature type="transmembrane region" description="Helical" evidence="1">
    <location>
        <begin position="328"/>
        <end position="347"/>
    </location>
</feature>
<feature type="topological domain" description="Cytoplasmic" evidence="1">
    <location>
        <begin position="348"/>
        <end position="352"/>
    </location>
</feature>
<feature type="transmembrane region" description="Helical" evidence="1">
    <location>
        <begin position="353"/>
        <end position="374"/>
    </location>
</feature>
<feature type="topological domain" description="Periplasmic" evidence="1">
    <location>
        <begin position="375"/>
        <end position="384"/>
    </location>
</feature>
<feature type="intramembrane region" description="Helical" evidence="1">
    <location>
        <begin position="385"/>
        <end position="399"/>
    </location>
</feature>
<feature type="intramembrane region" description="Note=Loop between two helices" evidence="1">
    <location>
        <begin position="400"/>
        <end position="402"/>
    </location>
</feature>
<feature type="intramembrane region" description="Helical" evidence="1">
    <location>
        <begin position="403"/>
        <end position="414"/>
    </location>
</feature>
<feature type="intramembrane region" description="Note=Loop between two helices" evidence="1">
    <location>
        <begin position="415"/>
        <end position="419"/>
    </location>
</feature>
<feature type="transmembrane region" description="Helical" evidence="1">
    <location>
        <begin position="420"/>
        <end position="436"/>
    </location>
</feature>
<feature type="topological domain" description="Cytoplasmic" evidence="1">
    <location>
        <begin position="437"/>
        <end position="467"/>
    </location>
</feature>
<feature type="short sequence motif" description="Selectivity filter part_1" evidence="1">
    <location>
        <begin position="104"/>
        <end position="108"/>
    </location>
</feature>
<feature type="short sequence motif" description="Selectivity filter part_2" evidence="1">
    <location>
        <begin position="144"/>
        <end position="148"/>
    </location>
</feature>
<feature type="short sequence motif" description="Selectivity filter part_3" evidence="1">
    <location>
        <begin position="353"/>
        <end position="357"/>
    </location>
</feature>
<feature type="binding site" evidence="1">
    <location>
        <position position="105"/>
    </location>
    <ligand>
        <name>chloride</name>
        <dbReference type="ChEBI" id="CHEBI:17996"/>
    </ligand>
</feature>
<feature type="binding site" evidence="1">
    <location>
        <position position="354"/>
    </location>
    <ligand>
        <name>chloride</name>
        <dbReference type="ChEBI" id="CHEBI:17996"/>
    </ligand>
</feature>
<feature type="binding site" evidence="1">
    <location>
        <position position="355"/>
    </location>
    <ligand>
        <name>chloride</name>
        <dbReference type="ChEBI" id="CHEBI:17996"/>
    </ligand>
</feature>
<feature type="binding site" evidence="1">
    <location>
        <position position="443"/>
    </location>
    <ligand>
        <name>chloride</name>
        <dbReference type="ChEBI" id="CHEBI:17996"/>
    </ligand>
</feature>
<feature type="site" description="Mediates proton transfer from the outer aqueous phase to the interior of the protein; involved in linking H(+) and Cl(-) transport" evidence="1">
    <location>
        <position position="146"/>
    </location>
</feature>
<feature type="site" description="Mediates proton transfer from the protein to the inner aqueous phase" evidence="1">
    <location>
        <position position="201"/>
    </location>
</feature>
<name>CLCA_CROS8</name>
<dbReference type="EMBL" id="CP000783">
    <property type="protein sequence ID" value="ABU78407.1"/>
    <property type="molecule type" value="Genomic_DNA"/>
</dbReference>
<dbReference type="RefSeq" id="WP_012125720.1">
    <property type="nucleotide sequence ID" value="NC_009778.1"/>
</dbReference>
<dbReference type="SMR" id="A7MGR4"/>
<dbReference type="KEGG" id="esa:ESA_03185"/>
<dbReference type="PATRIC" id="fig|290339.8.peg.2816"/>
<dbReference type="HOGENOM" id="CLU_015263_7_0_6"/>
<dbReference type="Proteomes" id="UP000000260">
    <property type="component" value="Chromosome"/>
</dbReference>
<dbReference type="GO" id="GO:0005886">
    <property type="term" value="C:plasma membrane"/>
    <property type="evidence" value="ECO:0007669"/>
    <property type="project" value="UniProtKB-SubCell"/>
</dbReference>
<dbReference type="GO" id="GO:0015297">
    <property type="term" value="F:antiporter activity"/>
    <property type="evidence" value="ECO:0007669"/>
    <property type="project" value="UniProtKB-UniRule"/>
</dbReference>
<dbReference type="GO" id="GO:0005247">
    <property type="term" value="F:voltage-gated chloride channel activity"/>
    <property type="evidence" value="ECO:0007669"/>
    <property type="project" value="TreeGrafter"/>
</dbReference>
<dbReference type="CDD" id="cd01031">
    <property type="entry name" value="EriC"/>
    <property type="match status" value="1"/>
</dbReference>
<dbReference type="FunFam" id="1.10.3080.10:FF:000005">
    <property type="entry name" value="H(+)/Cl(-) exchange transporter ClcA"/>
    <property type="match status" value="1"/>
</dbReference>
<dbReference type="Gene3D" id="1.10.3080.10">
    <property type="entry name" value="Clc chloride channel"/>
    <property type="match status" value="1"/>
</dbReference>
<dbReference type="HAMAP" id="MF_01128">
    <property type="entry name" value="CLC_ClcA"/>
    <property type="match status" value="1"/>
</dbReference>
<dbReference type="InterPro" id="IPR023861">
    <property type="entry name" value="Cl-channel_ClcA"/>
</dbReference>
<dbReference type="InterPro" id="IPR014743">
    <property type="entry name" value="Cl-channel_core"/>
</dbReference>
<dbReference type="InterPro" id="IPR001807">
    <property type="entry name" value="ClC"/>
</dbReference>
<dbReference type="NCBIfam" id="NF003640">
    <property type="entry name" value="PRK05277.1"/>
    <property type="match status" value="1"/>
</dbReference>
<dbReference type="PANTHER" id="PTHR45711">
    <property type="entry name" value="CHLORIDE CHANNEL PROTEIN"/>
    <property type="match status" value="1"/>
</dbReference>
<dbReference type="PANTHER" id="PTHR45711:SF6">
    <property type="entry name" value="CHLORIDE CHANNEL PROTEIN"/>
    <property type="match status" value="1"/>
</dbReference>
<dbReference type="Pfam" id="PF00654">
    <property type="entry name" value="Voltage_CLC"/>
    <property type="match status" value="1"/>
</dbReference>
<dbReference type="PRINTS" id="PR00762">
    <property type="entry name" value="CLCHANNEL"/>
</dbReference>
<dbReference type="SUPFAM" id="SSF81340">
    <property type="entry name" value="Clc chloride channel"/>
    <property type="match status" value="1"/>
</dbReference>
<proteinExistence type="inferred from homology"/>
<reference key="1">
    <citation type="journal article" date="2010" name="PLoS ONE">
        <title>Genome sequence of Cronobacter sakazakii BAA-894 and comparative genomic hybridization analysis with other Cronobacter species.</title>
        <authorList>
            <person name="Kucerova E."/>
            <person name="Clifton S.W."/>
            <person name="Xia X.Q."/>
            <person name="Long F."/>
            <person name="Porwollik S."/>
            <person name="Fulton L."/>
            <person name="Fronick C."/>
            <person name="Minx P."/>
            <person name="Kyung K."/>
            <person name="Warren W."/>
            <person name="Fulton R."/>
            <person name="Feng D."/>
            <person name="Wollam A."/>
            <person name="Shah N."/>
            <person name="Bhonagiri V."/>
            <person name="Nash W.E."/>
            <person name="Hallsworth-Pepin K."/>
            <person name="Wilson R.K."/>
            <person name="McClelland M."/>
            <person name="Forsythe S.J."/>
        </authorList>
    </citation>
    <scope>NUCLEOTIDE SEQUENCE [LARGE SCALE GENOMIC DNA]</scope>
    <source>
        <strain>ATCC BAA-894</strain>
    </source>
</reference>
<comment type="function">
    <text evidence="1">Proton-coupled chloride transporter. Functions as antiport system and exchanges two chloride ions for 1 proton. Probably acts as an electrical shunt for an outwardly-directed proton pump that is linked to amino acid decarboxylation, as part of the extreme acid resistance (XAR) response.</text>
</comment>
<comment type="catalytic activity">
    <reaction evidence="1">
        <text>2 chloride(in) + H(+)(out) = 2 chloride(out) + H(+)(in)</text>
        <dbReference type="Rhea" id="RHEA:29567"/>
        <dbReference type="ChEBI" id="CHEBI:15378"/>
        <dbReference type="ChEBI" id="CHEBI:17996"/>
    </reaction>
</comment>
<comment type="subunit">
    <text evidence="1">Homodimer.</text>
</comment>
<comment type="subcellular location">
    <subcellularLocation>
        <location evidence="1">Cell inner membrane</location>
        <topology evidence="1">Multi-pass membrane protein</topology>
    </subcellularLocation>
</comment>
<comment type="similarity">
    <text evidence="1">Belongs to the chloride channel (TC 2.A.49) family. ClcA subfamily.</text>
</comment>
<evidence type="ECO:0000255" key="1">
    <source>
        <dbReference type="HAMAP-Rule" id="MF_01128"/>
    </source>
</evidence>
<sequence length="467" mass="49730">MKSQTIPTRRVRGFRRAAVIRQLLSRDKTPLTILLLASLTGVLAGLAGVAFEKAVAWVTAHRIEGLAQVAHIPWLVWLLAFLFSALLAMVGYFLVRRFAPEAGGSGIPEIEGALEELRPVRWWRVLPVKFFGGMGTLGAGMVLGREGPMVQMGGNIGRMVLDIFHRPDAEARHTLLATGAAAGLAAAFNAPLAGILFIIEEMRTQFHYNLISIKAVFTGVIMSTIVFRIFNGEKSVIEVGQLTDAPVYTLWLYLLLGIIFGAVGPLFNRLVLGMQDVFARIHGGNTTRWVLLGGAIGGACGLLALWEPAAAGGGFGLIPIAAAGNFTVGMLLFIFIARVVTTVFCFSSGAPGGIFAPMLALGTLLGSAFGMACAAWFPQWHLQAGTFAIAGMGALLAASVRAPITGIVLVLEMTDNYQLILPMIITCLGATLLAQFLGGKPLYSTILARTLAKQEAERQAQADGRNT</sequence>